<reference key="1">
    <citation type="journal article" date="1995" name="Nat. Genet.">
        <title>Beta-sarcoglycan (A3b) mutations cause autosomal recessive muscular dystrophy with loss of the sarcoglycan complex.</title>
        <authorList>
            <person name="Boennemann C.G."/>
            <person name="Modi R."/>
            <person name="Noguchi S."/>
            <person name="Mizuno Y."/>
            <person name="Yoshida M."/>
            <person name="Gussoni E."/>
            <person name="McNally E.M."/>
            <person name="Duggan D.J."/>
            <person name="Angelini C."/>
            <person name="Hoffman E.P."/>
            <person name="Ozawa E."/>
            <person name="Kunkel L.M."/>
        </authorList>
    </citation>
    <scope>NUCLEOTIDE SEQUENCE [MRNA] (ISOFORM 1)</scope>
    <source>
        <tissue>Muscle</tissue>
    </source>
</reference>
<reference key="2">
    <citation type="journal article" date="1995" name="Nat. Genet.">
        <title>Beta-sarcoglycan: characterization and role in limb-girdle muscular dystrophy linked to 4q12.</title>
        <authorList>
            <person name="Lim L.E."/>
            <person name="Duclos F."/>
            <person name="Broux O."/>
            <person name="Bourg N."/>
            <person name="Sunada Y."/>
            <person name="Allamand V."/>
            <person name="Meyer J."/>
            <person name="Richard I."/>
            <person name="Moomaw C."/>
            <person name="Slaughter C."/>
            <person name="Tome F.M.S."/>
            <person name="Fardeau M."/>
            <person name="Jackson C.E."/>
            <person name="Beckmann J.S."/>
            <person name="Campbell K.P."/>
        </authorList>
    </citation>
    <scope>NUCLEOTIDE SEQUENCE [MRNA] (ISOFORM 1)</scope>
    <scope>PROTEIN SEQUENCE OF 42-54; 112-173; 175-192 AND 228-253</scope>
    <scope>DISEASE</scope>
    <source>
        <tissue>Skeletal muscle</tissue>
    </source>
</reference>
<reference key="3">
    <citation type="journal article" date="1996" name="Hum. Mol. Genet.">
        <title>Genomic screening for beta-sarcoglycan gene mutations: missense mutations may cause severe limb-girdle muscular dystrophy type 2E (LGMD 2E).</title>
        <authorList>
            <person name="Bonnemann C.G."/>
            <person name="Passos-Bueno M.R."/>
            <person name="McNally E.M."/>
            <person name="Vainzof M."/>
            <person name="de Sa Moreira E."/>
            <person name="Marie S.K."/>
            <person name="Pavanello R.C."/>
            <person name="Noguchi S."/>
            <person name="Ozawa E."/>
            <person name="Zatz M."/>
            <person name="Kunkel L.M."/>
        </authorList>
    </citation>
    <scope>NUCLEOTIDE SEQUENCE [GENOMIC DNA / MRNA] (ISOFORM 1)</scope>
    <scope>VARIANTS LGMDR4 PRO-91; LYS-100 AND ARG-108</scope>
</reference>
<reference key="4">
    <citation type="submission" date="1996-12" db="EMBL/GenBank/DDBJ databases">
        <authorList>
            <person name="Bourg N."/>
        </authorList>
    </citation>
    <scope>NUCLEOTIDE SEQUENCE [GENOMIC DNA]</scope>
</reference>
<reference key="5">
    <citation type="journal article" date="2004" name="Nat. Genet.">
        <title>Complete sequencing and characterization of 21,243 full-length human cDNAs.</title>
        <authorList>
            <person name="Ota T."/>
            <person name="Suzuki Y."/>
            <person name="Nishikawa T."/>
            <person name="Otsuki T."/>
            <person name="Sugiyama T."/>
            <person name="Irie R."/>
            <person name="Wakamatsu A."/>
            <person name="Hayashi K."/>
            <person name="Sato H."/>
            <person name="Nagai K."/>
            <person name="Kimura K."/>
            <person name="Makita H."/>
            <person name="Sekine M."/>
            <person name="Obayashi M."/>
            <person name="Nishi T."/>
            <person name="Shibahara T."/>
            <person name="Tanaka T."/>
            <person name="Ishii S."/>
            <person name="Yamamoto J."/>
            <person name="Saito K."/>
            <person name="Kawai Y."/>
            <person name="Isono Y."/>
            <person name="Nakamura Y."/>
            <person name="Nagahari K."/>
            <person name="Murakami K."/>
            <person name="Yasuda T."/>
            <person name="Iwayanagi T."/>
            <person name="Wagatsuma M."/>
            <person name="Shiratori A."/>
            <person name="Sudo H."/>
            <person name="Hosoiri T."/>
            <person name="Kaku Y."/>
            <person name="Kodaira H."/>
            <person name="Kondo H."/>
            <person name="Sugawara M."/>
            <person name="Takahashi M."/>
            <person name="Kanda K."/>
            <person name="Yokoi T."/>
            <person name="Furuya T."/>
            <person name="Kikkawa E."/>
            <person name="Omura Y."/>
            <person name="Abe K."/>
            <person name="Kamihara K."/>
            <person name="Katsuta N."/>
            <person name="Sato K."/>
            <person name="Tanikawa M."/>
            <person name="Yamazaki M."/>
            <person name="Ninomiya K."/>
            <person name="Ishibashi T."/>
            <person name="Yamashita H."/>
            <person name="Murakawa K."/>
            <person name="Fujimori K."/>
            <person name="Tanai H."/>
            <person name="Kimata M."/>
            <person name="Watanabe M."/>
            <person name="Hiraoka S."/>
            <person name="Chiba Y."/>
            <person name="Ishida S."/>
            <person name="Ono Y."/>
            <person name="Takiguchi S."/>
            <person name="Watanabe S."/>
            <person name="Yosida M."/>
            <person name="Hotuta T."/>
            <person name="Kusano J."/>
            <person name="Kanehori K."/>
            <person name="Takahashi-Fujii A."/>
            <person name="Hara H."/>
            <person name="Tanase T.-O."/>
            <person name="Nomura Y."/>
            <person name="Togiya S."/>
            <person name="Komai F."/>
            <person name="Hara R."/>
            <person name="Takeuchi K."/>
            <person name="Arita M."/>
            <person name="Imose N."/>
            <person name="Musashino K."/>
            <person name="Yuuki H."/>
            <person name="Oshima A."/>
            <person name="Sasaki N."/>
            <person name="Aotsuka S."/>
            <person name="Yoshikawa Y."/>
            <person name="Matsunawa H."/>
            <person name="Ichihara T."/>
            <person name="Shiohata N."/>
            <person name="Sano S."/>
            <person name="Moriya S."/>
            <person name="Momiyama H."/>
            <person name="Satoh N."/>
            <person name="Takami S."/>
            <person name="Terashima Y."/>
            <person name="Suzuki O."/>
            <person name="Nakagawa S."/>
            <person name="Senoh A."/>
            <person name="Mizoguchi H."/>
            <person name="Goto Y."/>
            <person name="Shimizu F."/>
            <person name="Wakebe H."/>
            <person name="Hishigaki H."/>
            <person name="Watanabe T."/>
            <person name="Sugiyama A."/>
            <person name="Takemoto M."/>
            <person name="Kawakami B."/>
            <person name="Yamazaki M."/>
            <person name="Watanabe K."/>
            <person name="Kumagai A."/>
            <person name="Itakura S."/>
            <person name="Fukuzumi Y."/>
            <person name="Fujimori Y."/>
            <person name="Komiyama M."/>
            <person name="Tashiro H."/>
            <person name="Tanigami A."/>
            <person name="Fujiwara T."/>
            <person name="Ono T."/>
            <person name="Yamada K."/>
            <person name="Fujii Y."/>
            <person name="Ozaki K."/>
            <person name="Hirao M."/>
            <person name="Ohmori Y."/>
            <person name="Kawabata A."/>
            <person name="Hikiji T."/>
            <person name="Kobatake N."/>
            <person name="Inagaki H."/>
            <person name="Ikema Y."/>
            <person name="Okamoto S."/>
            <person name="Okitani R."/>
            <person name="Kawakami T."/>
            <person name="Noguchi S."/>
            <person name="Itoh T."/>
            <person name="Shigeta K."/>
            <person name="Senba T."/>
            <person name="Matsumura K."/>
            <person name="Nakajima Y."/>
            <person name="Mizuno T."/>
            <person name="Morinaga M."/>
            <person name="Sasaki M."/>
            <person name="Togashi T."/>
            <person name="Oyama M."/>
            <person name="Hata H."/>
            <person name="Watanabe M."/>
            <person name="Komatsu T."/>
            <person name="Mizushima-Sugano J."/>
            <person name="Satoh T."/>
            <person name="Shirai Y."/>
            <person name="Takahashi Y."/>
            <person name="Nakagawa K."/>
            <person name="Okumura K."/>
            <person name="Nagase T."/>
            <person name="Nomura N."/>
            <person name="Kikuchi H."/>
            <person name="Masuho Y."/>
            <person name="Yamashita R."/>
            <person name="Nakai K."/>
            <person name="Yada T."/>
            <person name="Nakamura Y."/>
            <person name="Ohara O."/>
            <person name="Isogai T."/>
            <person name="Sugano S."/>
        </authorList>
    </citation>
    <scope>NUCLEOTIDE SEQUENCE [LARGE SCALE MRNA] (ISOFORM 2)</scope>
    <source>
        <tissue>Brain</tissue>
    </source>
</reference>
<reference key="6">
    <citation type="journal article" date="2005" name="Nature">
        <title>Generation and annotation of the DNA sequences of human chromosomes 2 and 4.</title>
        <authorList>
            <person name="Hillier L.W."/>
            <person name="Graves T.A."/>
            <person name="Fulton R.S."/>
            <person name="Fulton L.A."/>
            <person name="Pepin K.H."/>
            <person name="Minx P."/>
            <person name="Wagner-McPherson C."/>
            <person name="Layman D."/>
            <person name="Wylie K."/>
            <person name="Sekhon M."/>
            <person name="Becker M.C."/>
            <person name="Fewell G.A."/>
            <person name="Delehaunty K.D."/>
            <person name="Miner T.L."/>
            <person name="Nash W.E."/>
            <person name="Kremitzki C."/>
            <person name="Oddy L."/>
            <person name="Du H."/>
            <person name="Sun H."/>
            <person name="Bradshaw-Cordum H."/>
            <person name="Ali J."/>
            <person name="Carter J."/>
            <person name="Cordes M."/>
            <person name="Harris A."/>
            <person name="Isak A."/>
            <person name="van Brunt A."/>
            <person name="Nguyen C."/>
            <person name="Du F."/>
            <person name="Courtney L."/>
            <person name="Kalicki J."/>
            <person name="Ozersky P."/>
            <person name="Abbott S."/>
            <person name="Armstrong J."/>
            <person name="Belter E.A."/>
            <person name="Caruso L."/>
            <person name="Cedroni M."/>
            <person name="Cotton M."/>
            <person name="Davidson T."/>
            <person name="Desai A."/>
            <person name="Elliott G."/>
            <person name="Erb T."/>
            <person name="Fronick C."/>
            <person name="Gaige T."/>
            <person name="Haakenson W."/>
            <person name="Haglund K."/>
            <person name="Holmes A."/>
            <person name="Harkins R."/>
            <person name="Kim K."/>
            <person name="Kruchowski S.S."/>
            <person name="Strong C.M."/>
            <person name="Grewal N."/>
            <person name="Goyea E."/>
            <person name="Hou S."/>
            <person name="Levy A."/>
            <person name="Martinka S."/>
            <person name="Mead K."/>
            <person name="McLellan M.D."/>
            <person name="Meyer R."/>
            <person name="Randall-Maher J."/>
            <person name="Tomlinson C."/>
            <person name="Dauphin-Kohlberg S."/>
            <person name="Kozlowicz-Reilly A."/>
            <person name="Shah N."/>
            <person name="Swearengen-Shahid S."/>
            <person name="Snider J."/>
            <person name="Strong J.T."/>
            <person name="Thompson J."/>
            <person name="Yoakum M."/>
            <person name="Leonard S."/>
            <person name="Pearman C."/>
            <person name="Trani L."/>
            <person name="Radionenko M."/>
            <person name="Waligorski J.E."/>
            <person name="Wang C."/>
            <person name="Rock S.M."/>
            <person name="Tin-Wollam A.-M."/>
            <person name="Maupin R."/>
            <person name="Latreille P."/>
            <person name="Wendl M.C."/>
            <person name="Yang S.-P."/>
            <person name="Pohl C."/>
            <person name="Wallis J.W."/>
            <person name="Spieth J."/>
            <person name="Bieri T.A."/>
            <person name="Berkowicz N."/>
            <person name="Nelson J.O."/>
            <person name="Osborne J."/>
            <person name="Ding L."/>
            <person name="Meyer R."/>
            <person name="Sabo A."/>
            <person name="Shotland Y."/>
            <person name="Sinha P."/>
            <person name="Wohldmann P.E."/>
            <person name="Cook L.L."/>
            <person name="Hickenbotham M.T."/>
            <person name="Eldred J."/>
            <person name="Williams D."/>
            <person name="Jones T.A."/>
            <person name="She X."/>
            <person name="Ciccarelli F.D."/>
            <person name="Izaurralde E."/>
            <person name="Taylor J."/>
            <person name="Schmutz J."/>
            <person name="Myers R.M."/>
            <person name="Cox D.R."/>
            <person name="Huang X."/>
            <person name="McPherson J.D."/>
            <person name="Mardis E.R."/>
            <person name="Clifton S.W."/>
            <person name="Warren W.C."/>
            <person name="Chinwalla A.T."/>
            <person name="Eddy S.R."/>
            <person name="Marra M.A."/>
            <person name="Ovcharenko I."/>
            <person name="Furey T.S."/>
            <person name="Miller W."/>
            <person name="Eichler E.E."/>
            <person name="Bork P."/>
            <person name="Suyama M."/>
            <person name="Torrents D."/>
            <person name="Waterston R.H."/>
            <person name="Wilson R.K."/>
        </authorList>
    </citation>
    <scope>NUCLEOTIDE SEQUENCE [LARGE SCALE GENOMIC DNA]</scope>
</reference>
<reference key="7">
    <citation type="journal article" date="2004" name="Genome Res.">
        <title>The status, quality, and expansion of the NIH full-length cDNA project: the Mammalian Gene Collection (MGC).</title>
        <authorList>
            <consortium name="The MGC Project Team"/>
        </authorList>
    </citation>
    <scope>NUCLEOTIDE SEQUENCE [LARGE SCALE MRNA] (ISOFORM 1)</scope>
    <source>
        <tissue>Placenta</tissue>
    </source>
</reference>
<reference key="8">
    <citation type="journal article" date="2009" name="J. Proteome Res.">
        <title>Glycoproteomics analysis of human liver tissue by combination of multiple enzyme digestion and hydrazide chemistry.</title>
        <authorList>
            <person name="Chen R."/>
            <person name="Jiang X."/>
            <person name="Sun D."/>
            <person name="Han G."/>
            <person name="Wang F."/>
            <person name="Ye M."/>
            <person name="Wang L."/>
            <person name="Zou H."/>
        </authorList>
    </citation>
    <scope>GLYCOSYLATION [LARGE SCALE ANALYSIS] AT ASN-158 AND ASN-211</scope>
    <source>
        <tissue>Liver</tissue>
    </source>
</reference>
<reference key="9">
    <citation type="journal article" date="1998" name="Neuromuscul. Disord.">
        <title>LGMD 2E in Tunisia is caused by a homozygous missense mutation in beta-sarcoglycan exon 3.</title>
        <authorList>
            <person name="Bonnemann C.G."/>
            <person name="Wong J."/>
            <person name="Ben-Hamida C."/>
            <person name="Ben-Hamida M."/>
            <person name="Hentati F."/>
            <person name="Kunkel L.M."/>
        </authorList>
    </citation>
    <scope>VARIANT LGMDR4 LEU-91</scope>
</reference>
<reference key="10">
    <citation type="journal article" date="1997" name="N. Engl. J. Med.">
        <title>Mutations in the sarcoglycan genes in patients with myopathy.</title>
        <authorList>
            <person name="Duggan D.J."/>
            <person name="Gorospe J.R."/>
            <person name="Fanin M."/>
            <person name="Hoffman E.P."/>
            <person name="Angelini C."/>
        </authorList>
    </citation>
    <scope>VARIANTS LGMDR4 GLU-11; PHE-114; ASP-139 AND ALA-182</scope>
</reference>
<reference key="11">
    <citation type="journal article" date="1998" name="Hum. Mutat.">
        <title>Novel mutation (Y184C) in exon 4 of the beta-sarcoglycan gene identified in a Portuguese patient.</title>
        <authorList>
            <person name="dos Santos M.R."/>
            <person name="Jorge P."/>
            <person name="Ribeiro E.M."/>
            <person name="Pires M.M."/>
            <person name="Guimaraes A."/>
        </authorList>
    </citation>
    <scope>VARIANT DMD-LIKE CYS-184</scope>
</reference>
<reference key="12">
    <citation type="journal article" date="1998" name="Neuromuscul. Disord.">
        <title>Beta-sarcoglycan: genomic analysis and identification of a novel missense mutation in the LGMD2E Amish isolate.</title>
        <authorList>
            <person name="Duclos F."/>
            <person name="Broux O."/>
            <person name="Bourg N."/>
            <person name="Straub V."/>
            <person name="Feldman G.L."/>
            <person name="Sunada Y."/>
            <person name="Lim L.E."/>
            <person name="Piccolo F."/>
            <person name="Cutshall S."/>
            <person name="Gary F."/>
            <person name="Quetier F."/>
            <person name="Kaplan J.C."/>
            <person name="Jackson C.E."/>
            <person name="Beckmann J.S."/>
            <person name="Campbell K.P."/>
        </authorList>
    </citation>
    <scope>VARIANTS LGMDR4 CYS-91; PHE-119 AND ARG-151</scope>
</reference>
<reference key="13">
    <citation type="journal article" date="2018" name="Physiol. Genomics">
        <title>The impact of PYROXD1 deficiency on cellular respiration and correlations with genetic analyses of limb-girdle muscular dystrophy in Saudi Arabia and Sudan.</title>
        <authorList>
            <person name="Saha M."/>
            <person name="Reddy H.M."/>
            <person name="Salih M."/>
            <person name="Estrella E."/>
            <person name="Jones M.D."/>
            <person name="Mitsuhashi S."/>
            <person name="Cho K.A."/>
            <person name="Suzuki-Hatano S."/>
            <person name="Rizzo S.A."/>
            <person name="Hamad M.H."/>
            <person name="Mukhtar M.M."/>
            <person name="Hamed A.A."/>
            <person name="Elseed M.A."/>
            <person name="Lek M."/>
            <person name="Valkanas E."/>
            <person name="MacArthur D.G."/>
            <person name="Kunkel L.M."/>
            <person name="Pacak C.A."/>
            <person name="Draper I."/>
            <person name="Kang P.B."/>
        </authorList>
    </citation>
    <scope>VARIANT LGMDR4 38-SER--HIS-318 DEL</scope>
</reference>
<protein>
    <recommendedName>
        <fullName>Beta-sarcoglycan</fullName>
        <shortName>Beta-SG</shortName>
    </recommendedName>
    <alternativeName>
        <fullName>43 kDa dystrophin-associated glycoprotein</fullName>
        <shortName>43DAG</shortName>
    </alternativeName>
    <alternativeName>
        <fullName>A3b</fullName>
    </alternativeName>
</protein>
<sequence>MAAAAAAAAEQQSSNGPVKKSMREKAVERRSVNKEHNSNFKAGYIPIDEDRLHKTGLRGRKGNLAICVIILLFILAVINLIITLVIWAVIRIGPNGCDSMEFHESGLLRFKQVSDMGVIHPLYKSTVGGRRNENLVITGNNQPIVFQQGTTKLSVENNKTSITSDIGMQFFDPRTQNILFSTDYETHEFHLPSGVKSLNVQKASTERITSNATSDLNIKVDGRAIVRGNEGVFIMGKTIEFHMGGNMELKAENSIILNGSVMVSTTRLPSSSSGDQLGSGDWVRYKLCMCADGTLFKVQVTSQNMGCQISDNPCGNTH</sequence>
<name>SGCB_HUMAN</name>
<keyword id="KW-0025">Alternative splicing</keyword>
<keyword id="KW-1003">Cell membrane</keyword>
<keyword id="KW-0963">Cytoplasm</keyword>
<keyword id="KW-0206">Cytoskeleton</keyword>
<keyword id="KW-0903">Direct protein sequencing</keyword>
<keyword id="KW-0225">Disease variant</keyword>
<keyword id="KW-1015">Disulfide bond</keyword>
<keyword id="KW-0325">Glycoprotein</keyword>
<keyword id="KW-0947">Limb-girdle muscular dystrophy</keyword>
<keyword id="KW-0472">Membrane</keyword>
<keyword id="KW-1267">Proteomics identification</keyword>
<keyword id="KW-1185">Reference proteome</keyword>
<keyword id="KW-0735">Signal-anchor</keyword>
<keyword id="KW-0812">Transmembrane</keyword>
<keyword id="KW-1133">Transmembrane helix</keyword>
<evidence type="ECO:0000250" key="1"/>
<evidence type="ECO:0000255" key="2"/>
<evidence type="ECO:0000256" key="3">
    <source>
        <dbReference type="SAM" id="MobiDB-lite"/>
    </source>
</evidence>
<evidence type="ECO:0000269" key="4">
    <source>
    </source>
</evidence>
<evidence type="ECO:0000269" key="5">
    <source>
    </source>
</evidence>
<evidence type="ECO:0000269" key="6">
    <source>
    </source>
</evidence>
<evidence type="ECO:0000269" key="7">
    <source>
    </source>
</evidence>
<evidence type="ECO:0000269" key="8">
    <source>
    </source>
</evidence>
<evidence type="ECO:0000269" key="9">
    <source>
    </source>
</evidence>
<evidence type="ECO:0000269" key="10">
    <source>
    </source>
</evidence>
<evidence type="ECO:0000303" key="11">
    <source>
    </source>
</evidence>
<evidence type="ECO:0000305" key="12"/>
<dbReference type="EMBL" id="U31116">
    <property type="protein sequence ID" value="AAA87034.1"/>
    <property type="molecule type" value="mRNA"/>
</dbReference>
<dbReference type="EMBL" id="U29586">
    <property type="protein sequence ID" value="AAB41291.1"/>
    <property type="molecule type" value="mRNA"/>
</dbReference>
<dbReference type="EMBL" id="U63801">
    <property type="protein sequence ID" value="AAB46956.1"/>
    <property type="molecule type" value="Genomic_DNA"/>
</dbReference>
<dbReference type="EMBL" id="U63796">
    <property type="protein sequence ID" value="AAB46956.1"/>
    <property type="status" value="JOINED"/>
    <property type="molecule type" value="Genomic_DNA"/>
</dbReference>
<dbReference type="EMBL" id="U63797">
    <property type="protein sequence ID" value="AAB46956.1"/>
    <property type="status" value="JOINED"/>
    <property type="molecule type" value="Genomic_DNA"/>
</dbReference>
<dbReference type="EMBL" id="U63798">
    <property type="protein sequence ID" value="AAB46956.1"/>
    <property type="status" value="JOINED"/>
    <property type="molecule type" value="Genomic_DNA"/>
</dbReference>
<dbReference type="EMBL" id="U63800">
    <property type="protein sequence ID" value="AAB46956.1"/>
    <property type="status" value="JOINED"/>
    <property type="molecule type" value="Genomic_DNA"/>
</dbReference>
<dbReference type="EMBL" id="Y09781">
    <property type="protein sequence ID" value="CAA70920.1"/>
    <property type="molecule type" value="Genomic_DNA"/>
</dbReference>
<dbReference type="EMBL" id="AK299765">
    <property type="protein sequence ID" value="BAH13121.1"/>
    <property type="molecule type" value="mRNA"/>
</dbReference>
<dbReference type="EMBL" id="AC093858">
    <property type="status" value="NOT_ANNOTATED_CDS"/>
    <property type="molecule type" value="Genomic_DNA"/>
</dbReference>
<dbReference type="EMBL" id="BC020709">
    <property type="protein sequence ID" value="AAH20709.1"/>
    <property type="molecule type" value="mRNA"/>
</dbReference>
<dbReference type="CCDS" id="CCDS3488.1">
    <molecule id="Q16585-1"/>
</dbReference>
<dbReference type="PIR" id="I39151">
    <property type="entry name" value="I39151"/>
</dbReference>
<dbReference type="RefSeq" id="NP_000223.1">
    <molecule id="Q16585-1"/>
    <property type="nucleotide sequence ID" value="NM_000232.5"/>
</dbReference>
<dbReference type="RefSeq" id="XP_047272030.1">
    <molecule id="Q16585-2"/>
    <property type="nucleotide sequence ID" value="XM_047416074.1"/>
</dbReference>
<dbReference type="RefSeq" id="XP_054206689.1">
    <molecule id="Q16585-2"/>
    <property type="nucleotide sequence ID" value="XM_054350714.1"/>
</dbReference>
<dbReference type="SMR" id="Q16585"/>
<dbReference type="BioGRID" id="112341">
    <property type="interactions" value="140"/>
</dbReference>
<dbReference type="ComplexPortal" id="CPX-2424">
    <property type="entry name" value="Dystrophin glycoprotein complex, skeletal muscle variant"/>
</dbReference>
<dbReference type="ComplexPortal" id="CPX-2443">
    <property type="entry name" value="Dystrophin glycoprotein complex, neuromuscular junction variant"/>
</dbReference>
<dbReference type="ComplexPortal" id="CPX-2454">
    <property type="entry name" value="Dystrophin glycoprotein complex, retinal outer plexiform layer variant"/>
</dbReference>
<dbReference type="ComplexPortal" id="CPX-2455">
    <property type="entry name" value="Dystrophin glycoprotein complex, retinal inner limiting membrane variant"/>
</dbReference>
<dbReference type="CORUM" id="Q16585"/>
<dbReference type="FunCoup" id="Q16585">
    <property type="interactions" value="876"/>
</dbReference>
<dbReference type="IntAct" id="Q16585">
    <property type="interactions" value="87"/>
</dbReference>
<dbReference type="MINT" id="Q16585"/>
<dbReference type="STRING" id="9606.ENSP00000370839"/>
<dbReference type="GlyCosmos" id="Q16585">
    <property type="glycosylation" value="3 sites, No reported glycans"/>
</dbReference>
<dbReference type="GlyGen" id="Q16585">
    <property type="glycosylation" value="4 sites, 13 N-linked glycans (2 sites)"/>
</dbReference>
<dbReference type="iPTMnet" id="Q16585"/>
<dbReference type="PhosphoSitePlus" id="Q16585"/>
<dbReference type="SwissPalm" id="Q16585"/>
<dbReference type="BioMuta" id="SGCB"/>
<dbReference type="DMDM" id="13431857"/>
<dbReference type="jPOST" id="Q16585"/>
<dbReference type="MassIVE" id="Q16585"/>
<dbReference type="PaxDb" id="9606-ENSP00000370839"/>
<dbReference type="PeptideAtlas" id="Q16585"/>
<dbReference type="ProteomicsDB" id="60930">
    <molecule id="Q16585-1"/>
</dbReference>
<dbReference type="ProteomicsDB" id="6740"/>
<dbReference type="Pumba" id="Q16585"/>
<dbReference type="Antibodypedia" id="2557">
    <property type="antibodies" value="229 antibodies from 31 providers"/>
</dbReference>
<dbReference type="DNASU" id="6443"/>
<dbReference type="Ensembl" id="ENST00000381431.10">
    <molecule id="Q16585-1"/>
    <property type="protein sequence ID" value="ENSP00000370839.6"/>
    <property type="gene ID" value="ENSG00000163069.13"/>
</dbReference>
<dbReference type="GeneID" id="6443"/>
<dbReference type="KEGG" id="hsa:6443"/>
<dbReference type="MANE-Select" id="ENST00000381431.10">
    <property type="protein sequence ID" value="ENSP00000370839.6"/>
    <property type="RefSeq nucleotide sequence ID" value="NM_000232.5"/>
    <property type="RefSeq protein sequence ID" value="NP_000223.1"/>
</dbReference>
<dbReference type="AGR" id="HGNC:10806"/>
<dbReference type="CTD" id="6443"/>
<dbReference type="DisGeNET" id="6443"/>
<dbReference type="GeneCards" id="SGCB"/>
<dbReference type="HGNC" id="HGNC:10806">
    <property type="gene designation" value="SGCB"/>
</dbReference>
<dbReference type="HPA" id="ENSG00000163069">
    <property type="expression patterns" value="Tissue enhanced (skeletal)"/>
</dbReference>
<dbReference type="MalaCards" id="SGCB"/>
<dbReference type="MIM" id="600900">
    <property type="type" value="gene"/>
</dbReference>
<dbReference type="MIM" id="604286">
    <property type="type" value="phenotype"/>
</dbReference>
<dbReference type="neXtProt" id="NX_Q16585"/>
<dbReference type="OpenTargets" id="ENSG00000163069"/>
<dbReference type="Orphanet" id="119">
    <property type="disease" value="Beta-sarcoglycan-related limb-girdle muscular dystrophy R4"/>
</dbReference>
<dbReference type="PharmGKB" id="PA35717"/>
<dbReference type="VEuPathDB" id="HostDB:ENSG00000163069"/>
<dbReference type="eggNOG" id="ENOG502QUW4">
    <property type="taxonomic scope" value="Eukaryota"/>
</dbReference>
<dbReference type="GeneTree" id="ENSGT00390000008110"/>
<dbReference type="HOGENOM" id="CLU_066515_1_0_1"/>
<dbReference type="InParanoid" id="Q16585"/>
<dbReference type="OMA" id="KGVQGME"/>
<dbReference type="OrthoDB" id="5843723at2759"/>
<dbReference type="PAN-GO" id="Q16585">
    <property type="GO annotations" value="2 GO annotations based on evolutionary models"/>
</dbReference>
<dbReference type="PhylomeDB" id="Q16585"/>
<dbReference type="TreeFam" id="TF313538"/>
<dbReference type="PathwayCommons" id="Q16585"/>
<dbReference type="Reactome" id="R-HSA-9913351">
    <property type="pathway name" value="Formation of the dystrophin-glycoprotein complex (DGC)"/>
</dbReference>
<dbReference type="SignaLink" id="Q16585"/>
<dbReference type="SIGNOR" id="Q16585"/>
<dbReference type="BioGRID-ORCS" id="6443">
    <property type="hits" value="9 hits in 1147 CRISPR screens"/>
</dbReference>
<dbReference type="ChiTaRS" id="SGCB">
    <property type="organism name" value="human"/>
</dbReference>
<dbReference type="GeneWiki" id="SGCB"/>
<dbReference type="GenomeRNAi" id="6443"/>
<dbReference type="Pharos" id="Q16585">
    <property type="development level" value="Tbio"/>
</dbReference>
<dbReference type="PRO" id="PR:Q16585"/>
<dbReference type="Proteomes" id="UP000005640">
    <property type="component" value="Chromosome 4"/>
</dbReference>
<dbReference type="RNAct" id="Q16585">
    <property type="molecule type" value="protein"/>
</dbReference>
<dbReference type="Bgee" id="ENSG00000163069">
    <property type="expression patterns" value="Expressed in tendon of biceps brachii and 207 other cell types or tissues"/>
</dbReference>
<dbReference type="ExpressionAtlas" id="Q16585">
    <property type="expression patterns" value="baseline and differential"/>
</dbReference>
<dbReference type="GO" id="GO:0005856">
    <property type="term" value="C:cytoskeleton"/>
    <property type="evidence" value="ECO:0007669"/>
    <property type="project" value="UniProtKB-SubCell"/>
</dbReference>
<dbReference type="GO" id="GO:0016010">
    <property type="term" value="C:dystrophin-associated glycoprotein complex"/>
    <property type="evidence" value="ECO:0000314"/>
    <property type="project" value="UniProtKB"/>
</dbReference>
<dbReference type="GO" id="GO:0005789">
    <property type="term" value="C:endoplasmic reticulum membrane"/>
    <property type="evidence" value="ECO:0000304"/>
    <property type="project" value="Reactome"/>
</dbReference>
<dbReference type="GO" id="GO:0000139">
    <property type="term" value="C:Golgi membrane"/>
    <property type="evidence" value="ECO:0000304"/>
    <property type="project" value="Reactome"/>
</dbReference>
<dbReference type="GO" id="GO:0005886">
    <property type="term" value="C:plasma membrane"/>
    <property type="evidence" value="ECO:0000304"/>
    <property type="project" value="Reactome"/>
</dbReference>
<dbReference type="GO" id="GO:0016012">
    <property type="term" value="C:sarcoglycan complex"/>
    <property type="evidence" value="ECO:0000318"/>
    <property type="project" value="GO_Central"/>
</dbReference>
<dbReference type="GO" id="GO:0042383">
    <property type="term" value="C:sarcolemma"/>
    <property type="evidence" value="ECO:0000318"/>
    <property type="project" value="GO_Central"/>
</dbReference>
<dbReference type="GO" id="GO:0055013">
    <property type="term" value="P:cardiac muscle cell development"/>
    <property type="evidence" value="ECO:0007669"/>
    <property type="project" value="Ensembl"/>
</dbReference>
<dbReference type="GO" id="GO:0010467">
    <property type="term" value="P:gene expression"/>
    <property type="evidence" value="ECO:0007669"/>
    <property type="project" value="Ensembl"/>
</dbReference>
<dbReference type="GO" id="GO:0042593">
    <property type="term" value="P:glucose homeostasis"/>
    <property type="evidence" value="ECO:0007669"/>
    <property type="project" value="Ensembl"/>
</dbReference>
<dbReference type="GO" id="GO:0044381">
    <property type="term" value="P:glucose import in response to insulin stimulus"/>
    <property type="evidence" value="ECO:0007669"/>
    <property type="project" value="Ensembl"/>
</dbReference>
<dbReference type="GO" id="GO:0007517">
    <property type="term" value="P:muscle organ development"/>
    <property type="evidence" value="ECO:0000304"/>
    <property type="project" value="ProtInc"/>
</dbReference>
<dbReference type="GO" id="GO:0009749">
    <property type="term" value="P:response to glucose"/>
    <property type="evidence" value="ECO:0007669"/>
    <property type="project" value="Ensembl"/>
</dbReference>
<dbReference type="GO" id="GO:0097084">
    <property type="term" value="P:vascular associated smooth muscle cell development"/>
    <property type="evidence" value="ECO:0007669"/>
    <property type="project" value="Ensembl"/>
</dbReference>
<dbReference type="InterPro" id="IPR006875">
    <property type="entry name" value="Sarcoglycan"/>
</dbReference>
<dbReference type="InterPro" id="IPR027659">
    <property type="entry name" value="Sgcb"/>
</dbReference>
<dbReference type="PANTHER" id="PTHR21142:SF2">
    <property type="entry name" value="BETA-SARCOGLYCAN"/>
    <property type="match status" value="1"/>
</dbReference>
<dbReference type="PANTHER" id="PTHR21142">
    <property type="entry name" value="SARCOGLYCANS"/>
    <property type="match status" value="1"/>
</dbReference>
<dbReference type="Pfam" id="PF04790">
    <property type="entry name" value="Sarcoglycan_1"/>
    <property type="match status" value="1"/>
</dbReference>
<feature type="chain" id="PRO_0000175242" description="Beta-sarcoglycan">
    <location>
        <begin position="1"/>
        <end position="318"/>
    </location>
</feature>
<feature type="topological domain" description="Cytoplasmic" evidence="2">
    <location>
        <begin position="1"/>
        <end position="65"/>
    </location>
</feature>
<feature type="transmembrane region" description="Helical; Signal-anchor for type II membrane protein" evidence="2">
    <location>
        <begin position="66"/>
        <end position="86"/>
    </location>
</feature>
<feature type="topological domain" description="Extracellular" evidence="2">
    <location>
        <begin position="87"/>
        <end position="318"/>
    </location>
</feature>
<feature type="region of interest" description="Disordered" evidence="3">
    <location>
        <begin position="1"/>
        <end position="32"/>
    </location>
</feature>
<feature type="compositionally biased region" description="Basic and acidic residues" evidence="3">
    <location>
        <begin position="21"/>
        <end position="32"/>
    </location>
</feature>
<feature type="glycosylation site" description="N-linked (GlcNAc...) asparagine" evidence="5">
    <location>
        <position position="158"/>
    </location>
</feature>
<feature type="glycosylation site" description="N-linked (GlcNAc...) asparagine" evidence="5">
    <location>
        <position position="211"/>
    </location>
</feature>
<feature type="glycosylation site" description="N-linked (GlcNAc...) asparagine" evidence="2">
    <location>
        <position position="258"/>
    </location>
</feature>
<feature type="disulfide bond" evidence="2">
    <location>
        <begin position="288"/>
        <end position="314"/>
    </location>
</feature>
<feature type="disulfide bond" evidence="2">
    <location>
        <begin position="290"/>
        <end position="307"/>
    </location>
</feature>
<feature type="splice variant" id="VSP_056894" description="In isoform 2." evidence="11">
    <location>
        <begin position="12"/>
        <end position="81"/>
    </location>
</feature>
<feature type="sequence variant" id="VAR_010421" description="In LGMDR4; dbSNP:rs752492870." evidence="8">
    <original>Q</original>
    <variation>E</variation>
    <location>
        <position position="11"/>
    </location>
</feature>
<feature type="sequence variant" id="VAR_081100" description="In LGMDR4." evidence="6">
    <location>
        <begin position="38"/>
        <end position="318"/>
    </location>
</feature>
<feature type="sequence variant" id="VAR_010422" description="In LGMDR4; dbSNP:rs555514820." evidence="9">
    <original>R</original>
    <variation>C</variation>
    <location>
        <position position="91"/>
    </location>
</feature>
<feature type="sequence variant" id="VAR_010391" description="In LGMDR4; dbSNP:rs104893869." evidence="10">
    <original>R</original>
    <variation>L</variation>
    <location>
        <position position="91"/>
    </location>
</feature>
<feature type="sequence variant" id="VAR_010392" description="In LGMDR4; dbSNP:rs104893869." evidence="7">
    <original>R</original>
    <variation>P</variation>
    <location>
        <position position="91"/>
    </location>
</feature>
<feature type="sequence variant" id="VAR_010393" description="In LGMDR4; dbSNP:rs104893871." evidence="7">
    <original>M</original>
    <variation>K</variation>
    <location>
        <position position="100"/>
    </location>
</feature>
<feature type="sequence variant" id="VAR_010394" description="In LGMDR4; dbSNP:rs104893870." evidence="7">
    <original>L</original>
    <variation>R</variation>
    <location>
        <position position="108"/>
    </location>
</feature>
<feature type="sequence variant" id="VAR_010423" description="In LGMDR4; dbSNP:rs150518260." evidence="8">
    <original>S</original>
    <variation>F</variation>
    <location>
        <position position="114"/>
    </location>
</feature>
<feature type="sequence variant" id="VAR_010424" description="In LGMDR4; dbSNP:rs762412447." evidence="9">
    <original>I</original>
    <variation>F</variation>
    <location>
        <position position="119"/>
    </location>
</feature>
<feature type="sequence variant" id="VAR_010425" description="In LGMDR4; dbSNP:rs1560567653." evidence="8">
    <original>G</original>
    <variation>D</variation>
    <location>
        <position position="139"/>
    </location>
</feature>
<feature type="sequence variant" id="VAR_010395" description="In LGMDR4; dbSNP:rs28936383." evidence="9">
    <original>T</original>
    <variation>R</variation>
    <location>
        <position position="151"/>
    </location>
</feature>
<feature type="sequence variant" id="VAR_010426" description="In LGMDR4; dbSNP:rs779516489.">
    <original>G</original>
    <variation>S</variation>
    <location>
        <position position="167"/>
    </location>
</feature>
<feature type="sequence variant" id="VAR_010427" description="In LGMDR4." evidence="8">
    <original>T</original>
    <variation>A</variation>
    <location>
        <position position="182"/>
    </location>
</feature>
<feature type="sequence variant" id="VAR_010428" description="Found in a patient with a myopathy resembling Becker muscular dystrophy; likely pathogenic; dbSNP:rs1365923535." evidence="4">
    <original>Y</original>
    <variation>C</variation>
    <location>
        <position position="184"/>
    </location>
</feature>
<proteinExistence type="evidence at protein level"/>
<comment type="function">
    <text>Component of the sarcoglycan complex, a subcomplex of the dystrophin-glycoprotein complex which forms a link between the F-actin cytoskeleton and the extracellular matrix.</text>
</comment>
<comment type="subunit">
    <text evidence="1">Cross-link to form 2 major subcomplexes: one consisting of SGCB, SGCD and SGCG and the other consisting of SGCB and SGCD. The association between SGCB and SGCG is particularly strong while SGCA is loosely associated with the other sarcoglycans (By similarity).</text>
</comment>
<comment type="interaction">
    <interactant intactId="EBI-5663627">
        <id>Q16585</id>
    </interactant>
    <interactant intactId="EBI-10225815">
        <id>Q08AM2</id>
        <label>ADAM33</label>
    </interactant>
    <organismsDiffer>false</organismsDiffer>
    <experiments>3</experiments>
</comment>
<comment type="interaction">
    <interactant intactId="EBI-5663627">
        <id>Q16585</id>
    </interactant>
    <interactant intactId="EBI-11976321">
        <id>O95236-2</id>
        <label>APOL3</label>
    </interactant>
    <organismsDiffer>false</organismsDiffer>
    <experiments>3</experiments>
</comment>
<comment type="interaction">
    <interactant intactId="EBI-5663627">
        <id>Q16585</id>
    </interactant>
    <interactant intactId="EBI-12244618">
        <id>Q6PL45-2</id>
        <label>BRICD5</label>
    </interactant>
    <organismsDiffer>false</organismsDiffer>
    <experiments>3</experiments>
</comment>
<comment type="interaction">
    <interactant intactId="EBI-5663627">
        <id>Q16585</id>
    </interactant>
    <interactant intactId="EBI-11989440">
        <id>Q9BXN2-6</id>
        <label>CLEC7A</label>
    </interactant>
    <organismsDiffer>false</organismsDiffer>
    <experiments>3</experiments>
</comment>
<comment type="interaction">
    <interactant intactId="EBI-5663627">
        <id>Q16585</id>
    </interactant>
    <interactant intactId="EBI-11522780">
        <id>Q96DZ9-2</id>
        <label>CMTM5</label>
    </interactant>
    <organismsDiffer>false</organismsDiffer>
    <experiments>3</experiments>
</comment>
<comment type="interaction">
    <interactant intactId="EBI-5663627">
        <id>Q16585</id>
    </interactant>
    <interactant intactId="EBI-2339219">
        <id>Q08426</id>
        <label>EHHADH</label>
    </interactant>
    <organismsDiffer>false</organismsDiffer>
    <experiments>3</experiments>
</comment>
<comment type="interaction">
    <interactant intactId="EBI-5663627">
        <id>Q16585</id>
    </interactant>
    <interactant intactId="EBI-3932027">
        <id>P21145</id>
        <label>MAL</label>
    </interactant>
    <organismsDiffer>false</organismsDiffer>
    <experiments>3</experiments>
</comment>
<comment type="interaction">
    <interactant intactId="EBI-5663627">
        <id>Q16585</id>
    </interactant>
    <interactant intactId="EBI-11324706">
        <id>Q99735</id>
        <label>MGST2</label>
    </interactant>
    <organismsDiffer>false</organismsDiffer>
    <experiments>3</experiments>
</comment>
<comment type="interaction">
    <interactant intactId="EBI-5663627">
        <id>Q16585</id>
    </interactant>
    <interactant intactId="EBI-2802124">
        <id>Q92982</id>
        <label>NINJ1</label>
    </interactant>
    <organismsDiffer>false</organismsDiffer>
    <experiments>3</experiments>
</comment>
<comment type="interaction">
    <interactant intactId="EBI-5663627">
        <id>Q16585</id>
    </interactant>
    <interactant intactId="EBI-2845982">
        <id>Q01453</id>
        <label>PMP22</label>
    </interactant>
    <organismsDiffer>false</organismsDiffer>
    <experiments>3</experiments>
</comment>
<comment type="interaction">
    <interactant intactId="EBI-5663627">
        <id>Q16585</id>
    </interactant>
    <interactant intactId="EBI-3906138">
        <id>P53801</id>
        <label>PTTG1IP</label>
    </interactant>
    <organismsDiffer>false</organismsDiffer>
    <experiments>3</experiments>
</comment>
<comment type="interaction">
    <interactant intactId="EBI-5663627">
        <id>Q16585</id>
    </interactant>
    <interactant intactId="EBI-12877338">
        <id>Q08AT0</id>
        <label>SGCZ</label>
    </interactant>
    <organismsDiffer>false</organismsDiffer>
    <experiments>4</experiments>
</comment>
<comment type="interaction">
    <interactant intactId="EBI-5663627">
        <id>Q16585</id>
    </interactant>
    <interactant intactId="EBI-12904614">
        <id>Q9NWF4</id>
        <label>SLC52A1</label>
    </interactant>
    <organismsDiffer>false</organismsDiffer>
    <experiments>3</experiments>
</comment>
<comment type="interaction">
    <interactant intactId="EBI-5663627">
        <id>Q16585</id>
    </interactant>
    <interactant intactId="EBI-741850">
        <id>Q9BZL3</id>
        <label>SMIM3</label>
    </interactant>
    <organismsDiffer>false</organismsDiffer>
    <experiments>3</experiments>
</comment>
<comment type="interaction">
    <interactant intactId="EBI-5663627">
        <id>Q16585</id>
    </interactant>
    <interactant intactId="EBI-723946">
        <id>P17152</id>
        <label>TMEM11</label>
    </interactant>
    <organismsDiffer>false</organismsDiffer>
    <experiments>3</experiments>
</comment>
<comment type="interaction">
    <interactant intactId="EBI-5663627">
        <id>Q16585</id>
    </interactant>
    <interactant intactId="EBI-359977">
        <id>P01375</id>
        <label>TNF</label>
    </interactant>
    <organismsDiffer>false</organismsDiffer>
    <experiments>3</experiments>
</comment>
<comment type="subcellular location">
    <subcellularLocation>
        <location evidence="1">Cell membrane</location>
        <location evidence="1">Sarcolemma</location>
        <topology evidence="1">Single-pass type II membrane protein</topology>
    </subcellularLocation>
    <subcellularLocation>
        <location evidence="1">Cytoplasm</location>
        <location evidence="1">Cytoskeleton</location>
    </subcellularLocation>
</comment>
<comment type="alternative products">
    <event type="alternative splicing"/>
    <isoform>
        <id>Q16585-1</id>
        <name>1</name>
        <sequence type="displayed"/>
    </isoform>
    <isoform>
        <id>Q16585-2</id>
        <name>2</name>
        <sequence type="described" ref="VSP_056894"/>
    </isoform>
</comment>
<comment type="tissue specificity">
    <text>Highest expression in heart and skeletal muscle. Low expression in brain, kidney, placenta, pancreas and lung. High expression in fetal brain. Also found in fetal lung, kidney and liver.</text>
</comment>
<comment type="PTM">
    <text evidence="1">Disulfide bonds are present.</text>
</comment>
<comment type="disease" evidence="6 7 8 9 10">
    <disease id="DI-00662">
        <name>Muscular dystrophy, limb-girdle, autosomal recessive 4</name>
        <acronym>LGMDR4</acronym>
        <description>An autosomal recessive degenerative myopathy characterized by pelvic and shoulder muscle wasting, onset usually in childhood and variable progression rate.</description>
        <dbReference type="MIM" id="604286"/>
    </disease>
    <text>The disease is caused by variants affecting the gene represented in this entry.</text>
</comment>
<comment type="similarity">
    <text evidence="12">Belongs to the sarcoglycan beta/delta/gamma/zeta family.</text>
</comment>
<comment type="online information" name="Leiden Muscular Dystrophy pages">
    <link uri="https://www.dmd.nl/sgcb_home.html"/>
    <text>SGCB mutations in LGMD2E</text>
</comment>
<gene>
    <name type="primary">SGCB</name>
</gene>
<organism>
    <name type="scientific">Homo sapiens</name>
    <name type="common">Human</name>
    <dbReference type="NCBI Taxonomy" id="9606"/>
    <lineage>
        <taxon>Eukaryota</taxon>
        <taxon>Metazoa</taxon>
        <taxon>Chordata</taxon>
        <taxon>Craniata</taxon>
        <taxon>Vertebrata</taxon>
        <taxon>Euteleostomi</taxon>
        <taxon>Mammalia</taxon>
        <taxon>Eutheria</taxon>
        <taxon>Euarchontoglires</taxon>
        <taxon>Primates</taxon>
        <taxon>Haplorrhini</taxon>
        <taxon>Catarrhini</taxon>
        <taxon>Hominidae</taxon>
        <taxon>Homo</taxon>
    </lineage>
</organism>
<accession>Q16585</accession>
<accession>B7Z635</accession>
<accession>O00661</accession>